<comment type="function">
    <text evidence="1">F(1)F(0) ATP synthase produces ATP from ADP in the presence of a proton or sodium gradient. F-type ATPases consist of two structural domains, F(1) containing the extramembraneous catalytic core and F(0) containing the membrane proton channel, linked together by a central stalk and a peripheral stalk. During catalysis, ATP synthesis in the catalytic domain of F(1) is coupled via a rotary mechanism of the central stalk subunits to proton translocation.</text>
</comment>
<comment type="function">
    <text evidence="1">This protein is part of the stalk that links CF(0) to CF(1). It either transmits conformational changes from CF(0) to CF(1) or is implicated in proton conduction.</text>
</comment>
<comment type="subunit">
    <text evidence="1">F-type ATPases have 2 components, F(1) - the catalytic core - and F(0) - the membrane proton channel. F(1) has five subunits: alpha(3), beta(3), gamma(1), delta(1), epsilon(1). F(0) has three main subunits: a(1), b(2) and c(10-14). The alpha and beta chains form an alternating ring which encloses part of the gamma chain. F(1) is attached to F(0) by a central stalk formed by the gamma and epsilon chains, while a peripheral stalk is formed by the delta and b chains.</text>
</comment>
<comment type="subcellular location">
    <subcellularLocation>
        <location evidence="1">Cell inner membrane</location>
        <topology evidence="1">Peripheral membrane protein</topology>
    </subcellularLocation>
</comment>
<comment type="similarity">
    <text evidence="1">Belongs to the ATPase delta chain family.</text>
</comment>
<proteinExistence type="inferred from homology"/>
<evidence type="ECO:0000255" key="1">
    <source>
        <dbReference type="HAMAP-Rule" id="MF_01416"/>
    </source>
</evidence>
<gene>
    <name evidence="1" type="primary">atpH</name>
    <name type="ordered locus">lpp3056</name>
</gene>
<protein>
    <recommendedName>
        <fullName evidence="1">ATP synthase subunit delta</fullName>
    </recommendedName>
    <alternativeName>
        <fullName evidence="1">ATP synthase F(1) sector subunit delta</fullName>
    </alternativeName>
    <alternativeName>
        <fullName evidence="1">F-type ATPase subunit delta</fullName>
        <shortName evidence="1">F-ATPase subunit delta</shortName>
    </alternativeName>
</protein>
<feature type="chain" id="PRO_0000371018" description="ATP synthase subunit delta">
    <location>
        <begin position="1"/>
        <end position="180"/>
    </location>
</feature>
<keyword id="KW-0066">ATP synthesis</keyword>
<keyword id="KW-0997">Cell inner membrane</keyword>
<keyword id="KW-1003">Cell membrane</keyword>
<keyword id="KW-0139">CF(1)</keyword>
<keyword id="KW-0375">Hydrogen ion transport</keyword>
<keyword id="KW-0406">Ion transport</keyword>
<keyword id="KW-0472">Membrane</keyword>
<keyword id="KW-0813">Transport</keyword>
<organism>
    <name type="scientific">Legionella pneumophila (strain Paris)</name>
    <dbReference type="NCBI Taxonomy" id="297246"/>
    <lineage>
        <taxon>Bacteria</taxon>
        <taxon>Pseudomonadati</taxon>
        <taxon>Pseudomonadota</taxon>
        <taxon>Gammaproteobacteria</taxon>
        <taxon>Legionellales</taxon>
        <taxon>Legionellaceae</taxon>
        <taxon>Legionella</taxon>
    </lineage>
</organism>
<accession>Q5X0P0</accession>
<name>ATPD_LEGPA</name>
<reference key="1">
    <citation type="journal article" date="2004" name="Nat. Genet.">
        <title>Evidence in the Legionella pneumophila genome for exploitation of host cell functions and high genome plasticity.</title>
        <authorList>
            <person name="Cazalet C."/>
            <person name="Rusniok C."/>
            <person name="Brueggemann H."/>
            <person name="Zidane N."/>
            <person name="Magnier A."/>
            <person name="Ma L."/>
            <person name="Tichit M."/>
            <person name="Jarraud S."/>
            <person name="Bouchier C."/>
            <person name="Vandenesch F."/>
            <person name="Kunst F."/>
            <person name="Etienne J."/>
            <person name="Glaser P."/>
            <person name="Buchrieser C."/>
        </authorList>
    </citation>
    <scope>NUCLEOTIDE SEQUENCE [LARGE SCALE GENOMIC DNA]</scope>
    <source>
        <strain>Paris</strain>
    </source>
</reference>
<sequence>MSDSTTIARPYAKAIFEHALAEKKLSEWSEYLTLLAQVVLTPQATQFIANPASTDEQQIELLIEICGSKFKKNDALNNLIKLLTTNKRLMLLPEIKALYEVYRAEQEKILEVDVVSYSELTPAQQQRLSESLSQRLSRKVSLKISIDPSLLGGALIRAGDLVIDGSVRGKLNMLGTSLAA</sequence>
<dbReference type="EMBL" id="CR628336">
    <property type="protein sequence ID" value="CAH14209.1"/>
    <property type="molecule type" value="Genomic_DNA"/>
</dbReference>
<dbReference type="RefSeq" id="WP_011216821.1">
    <property type="nucleotide sequence ID" value="NC_006368.1"/>
</dbReference>
<dbReference type="SMR" id="Q5X0P0"/>
<dbReference type="KEGG" id="lpp:lpp3056"/>
<dbReference type="LegioList" id="lpp3056"/>
<dbReference type="HOGENOM" id="CLU_085114_3_0_6"/>
<dbReference type="GO" id="GO:0005886">
    <property type="term" value="C:plasma membrane"/>
    <property type="evidence" value="ECO:0007669"/>
    <property type="project" value="UniProtKB-SubCell"/>
</dbReference>
<dbReference type="GO" id="GO:0045259">
    <property type="term" value="C:proton-transporting ATP synthase complex"/>
    <property type="evidence" value="ECO:0007669"/>
    <property type="project" value="UniProtKB-KW"/>
</dbReference>
<dbReference type="GO" id="GO:0046933">
    <property type="term" value="F:proton-transporting ATP synthase activity, rotational mechanism"/>
    <property type="evidence" value="ECO:0007669"/>
    <property type="project" value="UniProtKB-UniRule"/>
</dbReference>
<dbReference type="Gene3D" id="1.10.520.20">
    <property type="entry name" value="N-terminal domain of the delta subunit of the F1F0-ATP synthase"/>
    <property type="match status" value="1"/>
</dbReference>
<dbReference type="HAMAP" id="MF_01416">
    <property type="entry name" value="ATP_synth_delta_bact"/>
    <property type="match status" value="1"/>
</dbReference>
<dbReference type="InterPro" id="IPR026015">
    <property type="entry name" value="ATP_synth_OSCP/delta_N_sf"/>
</dbReference>
<dbReference type="InterPro" id="IPR020781">
    <property type="entry name" value="ATPase_OSCP/d_CS"/>
</dbReference>
<dbReference type="InterPro" id="IPR000711">
    <property type="entry name" value="ATPase_OSCP/dsu"/>
</dbReference>
<dbReference type="NCBIfam" id="TIGR01145">
    <property type="entry name" value="ATP_synt_delta"/>
    <property type="match status" value="1"/>
</dbReference>
<dbReference type="NCBIfam" id="NF004402">
    <property type="entry name" value="PRK05758.2-2"/>
    <property type="match status" value="1"/>
</dbReference>
<dbReference type="PANTHER" id="PTHR11910">
    <property type="entry name" value="ATP SYNTHASE DELTA CHAIN"/>
    <property type="match status" value="1"/>
</dbReference>
<dbReference type="Pfam" id="PF00213">
    <property type="entry name" value="OSCP"/>
    <property type="match status" value="1"/>
</dbReference>
<dbReference type="PRINTS" id="PR00125">
    <property type="entry name" value="ATPASEDELTA"/>
</dbReference>
<dbReference type="SUPFAM" id="SSF47928">
    <property type="entry name" value="N-terminal domain of the delta subunit of the F1F0-ATP synthase"/>
    <property type="match status" value="1"/>
</dbReference>
<dbReference type="PROSITE" id="PS00389">
    <property type="entry name" value="ATPASE_DELTA"/>
    <property type="match status" value="1"/>
</dbReference>